<reference key="1">
    <citation type="journal article" date="2009" name="PLoS Genet.">
        <title>Organised genome dynamics in the Escherichia coli species results in highly diverse adaptive paths.</title>
        <authorList>
            <person name="Touchon M."/>
            <person name="Hoede C."/>
            <person name="Tenaillon O."/>
            <person name="Barbe V."/>
            <person name="Baeriswyl S."/>
            <person name="Bidet P."/>
            <person name="Bingen E."/>
            <person name="Bonacorsi S."/>
            <person name="Bouchier C."/>
            <person name="Bouvet O."/>
            <person name="Calteau A."/>
            <person name="Chiapello H."/>
            <person name="Clermont O."/>
            <person name="Cruveiller S."/>
            <person name="Danchin A."/>
            <person name="Diard M."/>
            <person name="Dossat C."/>
            <person name="Karoui M.E."/>
            <person name="Frapy E."/>
            <person name="Garry L."/>
            <person name="Ghigo J.M."/>
            <person name="Gilles A.M."/>
            <person name="Johnson J."/>
            <person name="Le Bouguenec C."/>
            <person name="Lescat M."/>
            <person name="Mangenot S."/>
            <person name="Martinez-Jehanne V."/>
            <person name="Matic I."/>
            <person name="Nassif X."/>
            <person name="Oztas S."/>
            <person name="Petit M.A."/>
            <person name="Pichon C."/>
            <person name="Rouy Z."/>
            <person name="Ruf C.S."/>
            <person name="Schneider D."/>
            <person name="Tourret J."/>
            <person name="Vacherie B."/>
            <person name="Vallenet D."/>
            <person name="Medigue C."/>
            <person name="Rocha E.P.C."/>
            <person name="Denamur E."/>
        </authorList>
    </citation>
    <scope>NUCLEOTIDE SEQUENCE [LARGE SCALE GENOMIC DNA]</scope>
    <source>
        <strain>UMN026 / ExPEC</strain>
    </source>
</reference>
<sequence>MPQISRYSDEQVEQLLAELLNVLEKHKAPTDLSLMVLGNMVTNLINTSIAPAQRQAIANSFARALQSSINEDKAH</sequence>
<dbReference type="EMBL" id="CU928163">
    <property type="protein sequence ID" value="CAR13710.1"/>
    <property type="molecule type" value="Genomic_DNA"/>
</dbReference>
<dbReference type="RefSeq" id="WP_001135667.1">
    <property type="nucleotide sequence ID" value="NC_011751.1"/>
</dbReference>
<dbReference type="RefSeq" id="YP_002413238.1">
    <property type="nucleotide sequence ID" value="NC_011751.1"/>
</dbReference>
<dbReference type="SMR" id="B7N5F1"/>
<dbReference type="STRING" id="585056.ECUMN_2524"/>
<dbReference type="KEGG" id="eum:ECUMN_2524"/>
<dbReference type="PATRIC" id="fig|585056.7.peg.2707"/>
<dbReference type="HOGENOM" id="CLU_175457_0_0_6"/>
<dbReference type="Proteomes" id="UP000007097">
    <property type="component" value="Chromosome"/>
</dbReference>
<dbReference type="FunFam" id="1.10.3390.10:FF:000001">
    <property type="entry name" value="UPF0352 protein YejL"/>
    <property type="match status" value="1"/>
</dbReference>
<dbReference type="Gene3D" id="1.10.3390.10">
    <property type="entry name" value="YejL-like"/>
    <property type="match status" value="1"/>
</dbReference>
<dbReference type="HAMAP" id="MF_00816">
    <property type="entry name" value="UPF0352"/>
    <property type="match status" value="1"/>
</dbReference>
<dbReference type="InterPro" id="IPR009857">
    <property type="entry name" value="UPF0352"/>
</dbReference>
<dbReference type="InterPro" id="IPR023202">
    <property type="entry name" value="YejL_sf"/>
</dbReference>
<dbReference type="NCBIfam" id="NF010242">
    <property type="entry name" value="PRK13689.1"/>
    <property type="match status" value="1"/>
</dbReference>
<dbReference type="Pfam" id="PF07208">
    <property type="entry name" value="DUF1414"/>
    <property type="match status" value="1"/>
</dbReference>
<dbReference type="PIRSF" id="PIRSF006188">
    <property type="entry name" value="UCP006188"/>
    <property type="match status" value="1"/>
</dbReference>
<dbReference type="SUPFAM" id="SSF158651">
    <property type="entry name" value="YejL-like"/>
    <property type="match status" value="1"/>
</dbReference>
<feature type="chain" id="PRO_1000199586" description="UPF0352 protein YejL">
    <location>
        <begin position="1"/>
        <end position="75"/>
    </location>
</feature>
<protein>
    <recommendedName>
        <fullName evidence="1">UPF0352 protein YejL</fullName>
    </recommendedName>
</protein>
<name>YEJL_ECOLU</name>
<gene>
    <name evidence="1" type="primary">yejL</name>
    <name type="ordered locus">ECUMN_2524</name>
</gene>
<evidence type="ECO:0000255" key="1">
    <source>
        <dbReference type="HAMAP-Rule" id="MF_00816"/>
    </source>
</evidence>
<accession>B7N5F1</accession>
<comment type="similarity">
    <text evidence="1">Belongs to the UPF0352 family.</text>
</comment>
<organism>
    <name type="scientific">Escherichia coli O17:K52:H18 (strain UMN026 / ExPEC)</name>
    <dbReference type="NCBI Taxonomy" id="585056"/>
    <lineage>
        <taxon>Bacteria</taxon>
        <taxon>Pseudomonadati</taxon>
        <taxon>Pseudomonadota</taxon>
        <taxon>Gammaproteobacteria</taxon>
        <taxon>Enterobacterales</taxon>
        <taxon>Enterobacteriaceae</taxon>
        <taxon>Escherichia</taxon>
    </lineage>
</organism>
<proteinExistence type="inferred from homology"/>